<sequence>MNVIAIMNHMGVYFKEEPIRELHRALEGLNFRIVYPNDREDLLKLIENNSRLCGVIFDWDKYNLELCEEISKLNEYMPLYAFANSYSTLDVSLNDLRMQVRFFEYALGAAADIAAKIRQNTDEYIDNILPPLTKALFKYVREGKYTFCTPGHMGGTAFQKSPVGSIFYDFFGPNTMKSDISISVSELGSLLDHSGPHKEAEEYIARVFNAERSYMVTNGTSTANKIVGMYSAPAGSTVLIDRNCHKSLTHLMMMSDITPIYFRPTRNAYGILGGIPQSEFQHATIAKRVKETPNATWPVHAVITNSTYDGLLYNTDYIKKTLDVKSIHFDSAWVPYTNFSPIYQGKCGMSGDRVEGKIIYETQSTHKLLAAFSQASMIHVKGDINEETFNEAYMMHTTTSPHYGIVASTETAAAMMKGNAGKRLINGSIERAIKFRKEIKRLKSESDGWFFDVWQPEHIDGAECWPLRSDSAWHGFKNIDNEHMYLDPIKVTILTPGMKKDGTMDEFGIPASLVAKYLDERGIIVEKTGPYNLLFLFSIGIDKTKALSLLRALTEFKRAFDLNLRVKNILPALYREAPEFYENMRIQELAQNIHKLVEHHNLPDLMYRAFEVLPKMVMTPYTAFQKELHGETEEVYLEEMVGRVNANMILPYPPGVPLVMPGEMITEESRPVLEFLQMLCEIGAHYPGFETDIHGAYRQADGRYTVKVLKENTK</sequence>
<evidence type="ECO:0000250" key="1"/>
<evidence type="ECO:0000305" key="2"/>
<keyword id="KW-0963">Cytoplasm</keyword>
<keyword id="KW-0210">Decarboxylase</keyword>
<keyword id="KW-0456">Lyase</keyword>
<keyword id="KW-0663">Pyridoxal phosphate</keyword>
<name>LDCI_SALTI</name>
<accession>P0A1Z1</accession>
<accession>Q60002</accession>
<proteinExistence type="inferred from homology"/>
<gene>
    <name type="primary">cadA</name>
    <name type="synonym">ldcI</name>
    <name type="ordered locus">STY2806</name>
    <name type="ordered locus">t0297</name>
</gene>
<organism>
    <name type="scientific">Salmonella typhi</name>
    <dbReference type="NCBI Taxonomy" id="90370"/>
    <lineage>
        <taxon>Bacteria</taxon>
        <taxon>Pseudomonadati</taxon>
        <taxon>Pseudomonadota</taxon>
        <taxon>Gammaproteobacteria</taxon>
        <taxon>Enterobacterales</taxon>
        <taxon>Enterobacteriaceae</taxon>
        <taxon>Salmonella</taxon>
    </lineage>
</organism>
<reference key="1">
    <citation type="journal article" date="2001" name="Nature">
        <title>Complete genome sequence of a multiple drug resistant Salmonella enterica serovar Typhi CT18.</title>
        <authorList>
            <person name="Parkhill J."/>
            <person name="Dougan G."/>
            <person name="James K.D."/>
            <person name="Thomson N.R."/>
            <person name="Pickard D."/>
            <person name="Wain J."/>
            <person name="Churcher C.M."/>
            <person name="Mungall K.L."/>
            <person name="Bentley S.D."/>
            <person name="Holden M.T.G."/>
            <person name="Sebaihia M."/>
            <person name="Baker S."/>
            <person name="Basham D."/>
            <person name="Brooks K."/>
            <person name="Chillingworth T."/>
            <person name="Connerton P."/>
            <person name="Cronin A."/>
            <person name="Davis P."/>
            <person name="Davies R.M."/>
            <person name="Dowd L."/>
            <person name="White N."/>
            <person name="Farrar J."/>
            <person name="Feltwell T."/>
            <person name="Hamlin N."/>
            <person name="Haque A."/>
            <person name="Hien T.T."/>
            <person name="Holroyd S."/>
            <person name="Jagels K."/>
            <person name="Krogh A."/>
            <person name="Larsen T.S."/>
            <person name="Leather S."/>
            <person name="Moule S."/>
            <person name="O'Gaora P."/>
            <person name="Parry C."/>
            <person name="Quail M.A."/>
            <person name="Rutherford K.M."/>
            <person name="Simmonds M."/>
            <person name="Skelton J."/>
            <person name="Stevens K."/>
            <person name="Whitehead S."/>
            <person name="Barrell B.G."/>
        </authorList>
    </citation>
    <scope>NUCLEOTIDE SEQUENCE [LARGE SCALE GENOMIC DNA]</scope>
    <source>
        <strain>CT18</strain>
    </source>
</reference>
<reference key="2">
    <citation type="journal article" date="2003" name="J. Bacteriol.">
        <title>Comparative genomics of Salmonella enterica serovar Typhi strains Ty2 and CT18.</title>
        <authorList>
            <person name="Deng W."/>
            <person name="Liou S.-R."/>
            <person name="Plunkett G. III"/>
            <person name="Mayhew G.F."/>
            <person name="Rose D.J."/>
            <person name="Burland V."/>
            <person name="Kodoyianni V."/>
            <person name="Schwartz D.C."/>
            <person name="Blattner F.R."/>
        </authorList>
    </citation>
    <scope>NUCLEOTIDE SEQUENCE [LARGE SCALE GENOMIC DNA]</scope>
    <source>
        <strain>ATCC 700931 / Ty2</strain>
    </source>
</reference>
<protein>
    <recommendedName>
        <fullName>Inducible lysine decarboxylase</fullName>
        <shortName>LDC</shortName>
        <ecNumber>4.1.1.18</ecNumber>
    </recommendedName>
</protein>
<feature type="chain" id="PRO_0000201140" description="Inducible lysine decarboxylase">
    <location>
        <begin position="1"/>
        <end position="714"/>
    </location>
</feature>
<feature type="modified residue" description="N6-(pyridoxal phosphate)lysine" evidence="1">
    <location>
        <position position="367"/>
    </location>
</feature>
<dbReference type="EC" id="4.1.1.18"/>
<dbReference type="EMBL" id="AL513382">
    <property type="protein sequence ID" value="CAD02762.1"/>
    <property type="molecule type" value="Genomic_DNA"/>
</dbReference>
<dbReference type="EMBL" id="AE014613">
    <property type="protein sequence ID" value="AAO68022.1"/>
    <property type="molecule type" value="Genomic_DNA"/>
</dbReference>
<dbReference type="RefSeq" id="NP_457089.1">
    <property type="nucleotide sequence ID" value="NC_003198.1"/>
</dbReference>
<dbReference type="RefSeq" id="WP_001100652.1">
    <property type="nucleotide sequence ID" value="NZ_WSUR01000007.1"/>
</dbReference>
<dbReference type="SMR" id="P0A1Z1"/>
<dbReference type="STRING" id="220341.gene:17586696"/>
<dbReference type="KEGG" id="stt:t0297"/>
<dbReference type="KEGG" id="sty:STY2806"/>
<dbReference type="PATRIC" id="fig|220341.7.peg.2853"/>
<dbReference type="eggNOG" id="COG1982">
    <property type="taxonomic scope" value="Bacteria"/>
</dbReference>
<dbReference type="HOGENOM" id="CLU_014292_3_0_6"/>
<dbReference type="OMA" id="HKSVFHA"/>
<dbReference type="OrthoDB" id="9761189at2"/>
<dbReference type="Proteomes" id="UP000000541">
    <property type="component" value="Chromosome"/>
</dbReference>
<dbReference type="Proteomes" id="UP000002670">
    <property type="component" value="Chromosome"/>
</dbReference>
<dbReference type="GO" id="GO:0005829">
    <property type="term" value="C:cytosol"/>
    <property type="evidence" value="ECO:0007669"/>
    <property type="project" value="TreeGrafter"/>
</dbReference>
<dbReference type="GO" id="GO:0008792">
    <property type="term" value="F:arginine decarboxylase activity"/>
    <property type="evidence" value="ECO:0007669"/>
    <property type="project" value="TreeGrafter"/>
</dbReference>
<dbReference type="GO" id="GO:0008923">
    <property type="term" value="F:lysine decarboxylase activity"/>
    <property type="evidence" value="ECO:0007669"/>
    <property type="project" value="UniProtKB-EC"/>
</dbReference>
<dbReference type="GO" id="GO:0030170">
    <property type="term" value="F:pyridoxal phosphate binding"/>
    <property type="evidence" value="ECO:0007669"/>
    <property type="project" value="TreeGrafter"/>
</dbReference>
<dbReference type="GO" id="GO:0006527">
    <property type="term" value="P:arginine catabolic process"/>
    <property type="evidence" value="ECO:0007669"/>
    <property type="project" value="TreeGrafter"/>
</dbReference>
<dbReference type="CDD" id="cd00615">
    <property type="entry name" value="Orn_deC_like"/>
    <property type="match status" value="1"/>
</dbReference>
<dbReference type="FunFam" id="3.40.50.2300:FF:000084">
    <property type="entry name" value="Lysine decarboxylase, inducible"/>
    <property type="match status" value="1"/>
</dbReference>
<dbReference type="FunFam" id="3.40.640.10:FF:000008">
    <property type="entry name" value="Lysine decarboxylase, inducible"/>
    <property type="match status" value="1"/>
</dbReference>
<dbReference type="FunFam" id="3.90.100.10:FF:000001">
    <property type="entry name" value="Lysine decarboxylase, inducible"/>
    <property type="match status" value="1"/>
</dbReference>
<dbReference type="FunFam" id="3.90.1150.10:FF:000016">
    <property type="entry name" value="Lysine decarboxylase, inducible"/>
    <property type="match status" value="1"/>
</dbReference>
<dbReference type="Gene3D" id="3.40.50.2300">
    <property type="match status" value="1"/>
</dbReference>
<dbReference type="Gene3D" id="3.90.1150.10">
    <property type="entry name" value="Aspartate Aminotransferase, domain 1"/>
    <property type="match status" value="1"/>
</dbReference>
<dbReference type="Gene3D" id="3.90.100.10">
    <property type="entry name" value="Orn/Lys/Arg decarboxylase, C-terminal domain"/>
    <property type="match status" value="1"/>
</dbReference>
<dbReference type="Gene3D" id="3.40.640.10">
    <property type="entry name" value="Type I PLP-dependent aspartate aminotransferase-like (Major domain)"/>
    <property type="match status" value="1"/>
</dbReference>
<dbReference type="InterPro" id="IPR005308">
    <property type="entry name" value="OKR_de-COase_N"/>
</dbReference>
<dbReference type="InterPro" id="IPR011193">
    <property type="entry name" value="Orn/lys/arg_de-COase"/>
</dbReference>
<dbReference type="InterPro" id="IPR000310">
    <property type="entry name" value="Orn/Lys/Arg_deCO2ase_major_dom"/>
</dbReference>
<dbReference type="InterPro" id="IPR008286">
    <property type="entry name" value="Prn/Lys/Arg_de-COase_C"/>
</dbReference>
<dbReference type="InterPro" id="IPR036633">
    <property type="entry name" value="Prn/Lys/Arg_de-COase_C_sf"/>
</dbReference>
<dbReference type="InterPro" id="IPR015424">
    <property type="entry name" value="PyrdxlP-dep_Trfase"/>
</dbReference>
<dbReference type="InterPro" id="IPR015421">
    <property type="entry name" value="PyrdxlP-dep_Trfase_major"/>
</dbReference>
<dbReference type="InterPro" id="IPR015422">
    <property type="entry name" value="PyrdxlP-dep_Trfase_small"/>
</dbReference>
<dbReference type="NCBIfam" id="NF011928">
    <property type="entry name" value="PRK15399.1"/>
    <property type="match status" value="1"/>
</dbReference>
<dbReference type="NCBIfam" id="NF011929">
    <property type="entry name" value="PRK15400.1"/>
    <property type="match status" value="1"/>
</dbReference>
<dbReference type="PANTHER" id="PTHR45229:SF3">
    <property type="entry name" value="BIODEGRADATIVE ARGININE DECARBOXYLASE"/>
    <property type="match status" value="1"/>
</dbReference>
<dbReference type="PANTHER" id="PTHR45229">
    <property type="entry name" value="CONSTITUTIVE ORNITHINE DECARBOXYLASE"/>
    <property type="match status" value="1"/>
</dbReference>
<dbReference type="Pfam" id="PF01276">
    <property type="entry name" value="OKR_DC_1"/>
    <property type="match status" value="1"/>
</dbReference>
<dbReference type="Pfam" id="PF03711">
    <property type="entry name" value="OKR_DC_1_C"/>
    <property type="match status" value="1"/>
</dbReference>
<dbReference type="Pfam" id="PF03709">
    <property type="entry name" value="OKR_DC_1_N"/>
    <property type="match status" value="1"/>
</dbReference>
<dbReference type="PIRSF" id="PIRSF009393">
    <property type="entry name" value="Orn_decarb"/>
    <property type="match status" value="1"/>
</dbReference>
<dbReference type="SUPFAM" id="SSF55904">
    <property type="entry name" value="Ornithine decarboxylase C-terminal domain"/>
    <property type="match status" value="1"/>
</dbReference>
<dbReference type="SUPFAM" id="SSF53383">
    <property type="entry name" value="PLP-dependent transferases"/>
    <property type="match status" value="1"/>
</dbReference>
<dbReference type="PROSITE" id="PS00703">
    <property type="entry name" value="OKR_DC_1"/>
    <property type="match status" value="1"/>
</dbReference>
<comment type="catalytic activity">
    <reaction>
        <text>L-lysine + H(+) = cadaverine + CO2</text>
        <dbReference type="Rhea" id="RHEA:22352"/>
        <dbReference type="ChEBI" id="CHEBI:15378"/>
        <dbReference type="ChEBI" id="CHEBI:16526"/>
        <dbReference type="ChEBI" id="CHEBI:32551"/>
        <dbReference type="ChEBI" id="CHEBI:58384"/>
        <dbReference type="EC" id="4.1.1.18"/>
    </reaction>
</comment>
<comment type="cofactor">
    <cofactor evidence="1">
        <name>pyridoxal 5'-phosphate</name>
        <dbReference type="ChEBI" id="CHEBI:597326"/>
    </cofactor>
</comment>
<comment type="subunit">
    <text evidence="1">Homodecamer. Interacts with RavA.</text>
</comment>
<comment type="subcellular location">
    <subcellularLocation>
        <location evidence="2">Cytoplasm</location>
    </subcellularLocation>
</comment>
<comment type="similarity">
    <text evidence="2">Belongs to the Orn/Lys/Arg decarboxylase class-I family.</text>
</comment>